<proteinExistence type="inferred from homology"/>
<reference key="1">
    <citation type="journal article" date="2007" name="J. Bacteriol.">
        <title>The complete genome sequence of Roseobacter denitrificans reveals a mixotrophic rather than photosynthetic metabolism.</title>
        <authorList>
            <person name="Swingley W.D."/>
            <person name="Sadekar S."/>
            <person name="Mastrian S.D."/>
            <person name="Matthies H.J."/>
            <person name="Hao J."/>
            <person name="Ramos H."/>
            <person name="Acharya C.R."/>
            <person name="Conrad A.L."/>
            <person name="Taylor H.L."/>
            <person name="Dejesa L.C."/>
            <person name="Shah M.K."/>
            <person name="O'Huallachain M.E."/>
            <person name="Lince M.T."/>
            <person name="Blankenship R.E."/>
            <person name="Beatty J.T."/>
            <person name="Touchman J.W."/>
        </authorList>
    </citation>
    <scope>NUCLEOTIDE SEQUENCE [LARGE SCALE GENOMIC DNA]</scope>
    <source>
        <strain>ATCC 33942 / OCh 114</strain>
    </source>
</reference>
<protein>
    <recommendedName>
        <fullName evidence="1">Nucleotide-binding protein RD1_1380</fullName>
    </recommendedName>
</protein>
<name>Y1380_ROSDO</name>
<sequence length="295" mass="33021">MTDTSTTARRIVFVTGPSGAGRSSALNVLEDAGFEVVDNLPLRLLDAFLDVPSSAQPLALGIDPRNRDFSTTVIVDALGKLTGIPGLAPELLYLDCSTEVLLRRFSETRRRHPLAPVDRPSEGIVRELEMLGPLKARADVLIDTTHLNVHELRAEVEHWFAPGGKRRLSVSVQSFSYKRGLPRSVDMVFDCRFLTNPYWVPELRSLNGTHDLVKKYVTADARFEQFARKVDDLSLLLLPAYRDEGKSYLSIAFGCTGGQHRSVVMAQCHALRLAEEGWQVSIRHRELDLRKNEET</sequence>
<accession>Q16AH2</accession>
<comment type="function">
    <text evidence="1">Displays ATPase and GTPase activities.</text>
</comment>
<comment type="similarity">
    <text evidence="1">Belongs to the RapZ-like family.</text>
</comment>
<keyword id="KW-0067">ATP-binding</keyword>
<keyword id="KW-0342">GTP-binding</keyword>
<keyword id="KW-0547">Nucleotide-binding</keyword>
<keyword id="KW-1185">Reference proteome</keyword>
<organism>
    <name type="scientific">Roseobacter denitrificans (strain ATCC 33942 / OCh 114)</name>
    <name type="common">Erythrobacter sp. (strain OCh 114)</name>
    <name type="synonym">Roseobacter denitrificans</name>
    <dbReference type="NCBI Taxonomy" id="375451"/>
    <lineage>
        <taxon>Bacteria</taxon>
        <taxon>Pseudomonadati</taxon>
        <taxon>Pseudomonadota</taxon>
        <taxon>Alphaproteobacteria</taxon>
        <taxon>Rhodobacterales</taxon>
        <taxon>Roseobacteraceae</taxon>
        <taxon>Roseobacter</taxon>
    </lineage>
</organism>
<evidence type="ECO:0000255" key="1">
    <source>
        <dbReference type="HAMAP-Rule" id="MF_00636"/>
    </source>
</evidence>
<feature type="chain" id="PRO_0000258993" description="Nucleotide-binding protein RD1_1380">
    <location>
        <begin position="1"/>
        <end position="295"/>
    </location>
</feature>
<feature type="binding site" evidence="1">
    <location>
        <begin position="16"/>
        <end position="23"/>
    </location>
    <ligand>
        <name>ATP</name>
        <dbReference type="ChEBI" id="CHEBI:30616"/>
    </ligand>
</feature>
<feature type="binding site" evidence="1">
    <location>
        <begin position="63"/>
        <end position="66"/>
    </location>
    <ligand>
        <name>GTP</name>
        <dbReference type="ChEBI" id="CHEBI:37565"/>
    </ligand>
</feature>
<gene>
    <name type="ordered locus">RD1_1380</name>
</gene>
<dbReference type="EMBL" id="CP000362">
    <property type="protein sequence ID" value="ABG31021.1"/>
    <property type="molecule type" value="Genomic_DNA"/>
</dbReference>
<dbReference type="RefSeq" id="WP_011567641.1">
    <property type="nucleotide sequence ID" value="NC_008209.1"/>
</dbReference>
<dbReference type="SMR" id="Q16AH2"/>
<dbReference type="STRING" id="375451.RD1_1380"/>
<dbReference type="KEGG" id="rde:RD1_1380"/>
<dbReference type="eggNOG" id="COG1660">
    <property type="taxonomic scope" value="Bacteria"/>
</dbReference>
<dbReference type="HOGENOM" id="CLU_059558_0_0_5"/>
<dbReference type="OrthoDB" id="9784461at2"/>
<dbReference type="Proteomes" id="UP000007029">
    <property type="component" value="Chromosome"/>
</dbReference>
<dbReference type="GO" id="GO:0005524">
    <property type="term" value="F:ATP binding"/>
    <property type="evidence" value="ECO:0007669"/>
    <property type="project" value="UniProtKB-UniRule"/>
</dbReference>
<dbReference type="GO" id="GO:0005525">
    <property type="term" value="F:GTP binding"/>
    <property type="evidence" value="ECO:0007669"/>
    <property type="project" value="UniProtKB-UniRule"/>
</dbReference>
<dbReference type="HAMAP" id="MF_00636">
    <property type="entry name" value="RapZ_like"/>
    <property type="match status" value="1"/>
</dbReference>
<dbReference type="InterPro" id="IPR027417">
    <property type="entry name" value="P-loop_NTPase"/>
</dbReference>
<dbReference type="InterPro" id="IPR005337">
    <property type="entry name" value="RapZ-like"/>
</dbReference>
<dbReference type="InterPro" id="IPR053930">
    <property type="entry name" value="RapZ-like_N"/>
</dbReference>
<dbReference type="InterPro" id="IPR053931">
    <property type="entry name" value="RapZ_C"/>
</dbReference>
<dbReference type="NCBIfam" id="NF003828">
    <property type="entry name" value="PRK05416.1"/>
    <property type="match status" value="1"/>
</dbReference>
<dbReference type="PANTHER" id="PTHR30448">
    <property type="entry name" value="RNASE ADAPTER PROTEIN RAPZ"/>
    <property type="match status" value="1"/>
</dbReference>
<dbReference type="PANTHER" id="PTHR30448:SF0">
    <property type="entry name" value="RNASE ADAPTER PROTEIN RAPZ"/>
    <property type="match status" value="1"/>
</dbReference>
<dbReference type="Pfam" id="PF22740">
    <property type="entry name" value="PapZ_C"/>
    <property type="match status" value="1"/>
</dbReference>
<dbReference type="Pfam" id="PF03668">
    <property type="entry name" value="RapZ-like_N"/>
    <property type="match status" value="1"/>
</dbReference>
<dbReference type="PIRSF" id="PIRSF005052">
    <property type="entry name" value="P-loopkin"/>
    <property type="match status" value="1"/>
</dbReference>
<dbReference type="SUPFAM" id="SSF52540">
    <property type="entry name" value="P-loop containing nucleoside triphosphate hydrolases"/>
    <property type="match status" value="1"/>
</dbReference>